<keyword id="KW-1015">Disulfide bond</keyword>
<keyword id="KW-0960">Knottin</keyword>
<keyword id="KW-0964">Secreted</keyword>
<keyword id="KW-0732">Signal</keyword>
<keyword id="KW-0800">Toxin</keyword>
<proteinExistence type="evidence at transcript level"/>
<dbReference type="EMBL" id="FJ804535">
    <property type="protein sequence ID" value="ACU56810.1"/>
    <property type="molecule type" value="mRNA"/>
</dbReference>
<dbReference type="SMR" id="C7T187"/>
<dbReference type="ConoServer" id="3842">
    <property type="toxin name" value="Eb6.20 precursor"/>
</dbReference>
<dbReference type="GO" id="GO:0005576">
    <property type="term" value="C:extracellular region"/>
    <property type="evidence" value="ECO:0007669"/>
    <property type="project" value="UniProtKB-SubCell"/>
</dbReference>
<dbReference type="GO" id="GO:0008200">
    <property type="term" value="F:ion channel inhibitor activity"/>
    <property type="evidence" value="ECO:0007669"/>
    <property type="project" value="InterPro"/>
</dbReference>
<dbReference type="GO" id="GO:0090729">
    <property type="term" value="F:toxin activity"/>
    <property type="evidence" value="ECO:0007669"/>
    <property type="project" value="UniProtKB-KW"/>
</dbReference>
<dbReference type="InterPro" id="IPR004214">
    <property type="entry name" value="Conotoxin"/>
</dbReference>
<dbReference type="Pfam" id="PF02950">
    <property type="entry name" value="Conotoxin"/>
    <property type="match status" value="1"/>
</dbReference>
<protein>
    <recommendedName>
        <fullName>Conotoxin Eb6.20</fullName>
    </recommendedName>
</protein>
<organism>
    <name type="scientific">Conus ebraeus</name>
    <name type="common">Hebrew cone</name>
    <dbReference type="NCBI Taxonomy" id="89425"/>
    <lineage>
        <taxon>Eukaryota</taxon>
        <taxon>Metazoa</taxon>
        <taxon>Spiralia</taxon>
        <taxon>Lophotrochozoa</taxon>
        <taxon>Mollusca</taxon>
        <taxon>Gastropoda</taxon>
        <taxon>Caenogastropoda</taxon>
        <taxon>Neogastropoda</taxon>
        <taxon>Conoidea</taxon>
        <taxon>Conidae</taxon>
        <taxon>Conus</taxon>
        <taxon>Virroconus</taxon>
    </lineage>
</organism>
<reference key="1">
    <citation type="journal article" date="2009" name="PLoS ONE">
        <title>Geographic variation in venom allelic composition and diets of the widespread predatory marine gastropod Conus ebraeus.</title>
        <authorList>
            <person name="Duda T.F. Jr."/>
            <person name="Chang D."/>
            <person name="Lewis B.D."/>
            <person name="Lee T."/>
        </authorList>
    </citation>
    <scope>NUCLEOTIDE SEQUENCE [MRNA]</scope>
    <source>
        <strain>Guam</strain>
        <tissue>Venom duct</tissue>
    </source>
</reference>
<comment type="subcellular location">
    <subcellularLocation>
        <location evidence="1">Secreted</location>
    </subcellularLocation>
</comment>
<comment type="tissue specificity">
    <text>Expressed by the venom duct.</text>
</comment>
<comment type="domain">
    <text evidence="1">The presence of a 'disulfide through disulfide knot' structurally defines this protein as a knottin.</text>
</comment>
<comment type="domain">
    <text>The cysteine framework is VI/VII (C-C-CC-C-C).</text>
</comment>
<comment type="miscellaneous">
    <text>This precursor corresponds to allele E1g. Has not been merged with other alleles since they may differ due to geographic variation (see strain in PubMed:19606224).</text>
</comment>
<comment type="similarity">
    <text evidence="3">Belongs to the conotoxin O1 superfamily.</text>
</comment>
<evidence type="ECO:0000250" key="1"/>
<evidence type="ECO:0000255" key="2"/>
<evidence type="ECO:0000305" key="3"/>
<sequence>VLIIAVLFLTACQLTTAETYSRGRQKHRARRSTDKNSKWTRECTRSGGACNSHTQCCDHFCSTATSTCI</sequence>
<name>O16K_CONEA</name>
<gene>
    <name type="primary">E1</name>
</gene>
<accession>C7T187</accession>
<feature type="signal peptide" evidence="2">
    <location>
        <begin position="1" status="less than"/>
        <end position="17"/>
    </location>
</feature>
<feature type="propeptide" id="PRO_0000414646" evidence="1">
    <location>
        <begin position="18"/>
        <end position="41"/>
    </location>
</feature>
<feature type="peptide" id="PRO_0000414647" description="Conotoxin Eb6.20">
    <location>
        <begin position="42"/>
        <end position="69"/>
    </location>
</feature>
<feature type="disulfide bond" evidence="1">
    <location>
        <begin position="43"/>
        <end position="57"/>
    </location>
</feature>
<feature type="disulfide bond" evidence="1">
    <location>
        <begin position="50"/>
        <end position="61"/>
    </location>
</feature>
<feature type="disulfide bond" evidence="1">
    <location>
        <begin position="56"/>
        <end position="68"/>
    </location>
</feature>
<feature type="non-terminal residue">
    <location>
        <position position="1"/>
    </location>
</feature>